<organism>
    <name type="scientific">Homo sapiens</name>
    <name type="common">Human</name>
    <dbReference type="NCBI Taxonomy" id="9606"/>
    <lineage>
        <taxon>Eukaryota</taxon>
        <taxon>Metazoa</taxon>
        <taxon>Chordata</taxon>
        <taxon>Craniata</taxon>
        <taxon>Vertebrata</taxon>
        <taxon>Euteleostomi</taxon>
        <taxon>Mammalia</taxon>
        <taxon>Eutheria</taxon>
        <taxon>Euarchontoglires</taxon>
        <taxon>Primates</taxon>
        <taxon>Haplorrhini</taxon>
        <taxon>Catarrhini</taxon>
        <taxon>Hominidae</taxon>
        <taxon>Homo</taxon>
    </lineage>
</organism>
<keyword id="KW-0002">3D-structure</keyword>
<keyword id="KW-0202">Cytokine</keyword>
<keyword id="KW-0903">Direct protein sequencing</keyword>
<keyword id="KW-0225">Disease variant</keyword>
<keyword id="KW-1015">Disulfide bond</keyword>
<keyword id="KW-1007">Palmoplantar keratoderma</keyword>
<keyword id="KW-1267">Proteomics identification</keyword>
<keyword id="KW-1185">Reference proteome</keyword>
<keyword id="KW-0964">Secreted</keyword>
<keyword id="KW-0732">Signal</keyword>
<dbReference type="EMBL" id="X99977">
    <property type="protein sequence ID" value="CAA68237.1"/>
    <property type="molecule type" value="Genomic_DNA"/>
</dbReference>
<dbReference type="EMBL" id="AY579079">
    <property type="protein sequence ID" value="AAT01436.1"/>
    <property type="molecule type" value="mRNA"/>
</dbReference>
<dbReference type="EMBL" id="AY579080">
    <property type="protein sequence ID" value="AAT01437.1"/>
    <property type="molecule type" value="mRNA"/>
</dbReference>
<dbReference type="EMBL" id="BC069292">
    <property type="protein sequence ID" value="AAH69292.1"/>
    <property type="molecule type" value="mRNA"/>
</dbReference>
<dbReference type="EMBL" id="BC105133">
    <property type="protein sequence ID" value="AAI05134.1"/>
    <property type="molecule type" value="mRNA"/>
</dbReference>
<dbReference type="EMBL" id="BC105135">
    <property type="protein sequence ID" value="AAI05136.1"/>
    <property type="molecule type" value="mRNA"/>
</dbReference>
<dbReference type="CCDS" id="CCDS6387.1"/>
<dbReference type="PIR" id="A59031">
    <property type="entry name" value="A59031"/>
</dbReference>
<dbReference type="RefSeq" id="NP_065160.1">
    <property type="nucleotide sequence ID" value="NM_020427.3"/>
</dbReference>
<dbReference type="PDB" id="6ZZE">
    <property type="method" value="NMR"/>
    <property type="chains" value="A=23-103"/>
</dbReference>
<dbReference type="PDB" id="6ZZF">
    <property type="method" value="NMR"/>
    <property type="chains" value="A=23-103"/>
</dbReference>
<dbReference type="PDBsum" id="6ZZE"/>
<dbReference type="PDBsum" id="6ZZF"/>
<dbReference type="SMR" id="P55000"/>
<dbReference type="BioGRID" id="121409">
    <property type="interactions" value="163"/>
</dbReference>
<dbReference type="FunCoup" id="P55000">
    <property type="interactions" value="426"/>
</dbReference>
<dbReference type="IntAct" id="P55000">
    <property type="interactions" value="144"/>
</dbReference>
<dbReference type="STRING" id="9606.ENSP00000246515"/>
<dbReference type="TCDB" id="8.A.31.1.3">
    <property type="family name" value="the ly-6 neurotoxin-like protein1 precursor (lynx1) family"/>
</dbReference>
<dbReference type="iPTMnet" id="P55000"/>
<dbReference type="PhosphoSitePlus" id="P55000"/>
<dbReference type="BioMuta" id="SLURP1"/>
<dbReference type="DMDM" id="3287957"/>
<dbReference type="MassIVE" id="P55000"/>
<dbReference type="PaxDb" id="9606-ENSP00000246515"/>
<dbReference type="PeptideAtlas" id="P55000"/>
<dbReference type="PRIDE" id="P55000"/>
<dbReference type="ProteomicsDB" id="56749"/>
<dbReference type="Pumba" id="P55000"/>
<dbReference type="Antibodypedia" id="27784">
    <property type="antibodies" value="155 antibodies from 21 providers"/>
</dbReference>
<dbReference type="DNASU" id="57152"/>
<dbReference type="Ensembl" id="ENST00000246515.2">
    <property type="protein sequence ID" value="ENSP00000246515.1"/>
    <property type="gene ID" value="ENSG00000126233.2"/>
</dbReference>
<dbReference type="GeneID" id="57152"/>
<dbReference type="KEGG" id="hsa:57152"/>
<dbReference type="MANE-Select" id="ENST00000246515.2">
    <property type="protein sequence ID" value="ENSP00000246515.1"/>
    <property type="RefSeq nucleotide sequence ID" value="NM_020427.3"/>
    <property type="RefSeq protein sequence ID" value="NP_065160.1"/>
</dbReference>
<dbReference type="UCSC" id="uc003ywy.3">
    <property type="organism name" value="human"/>
</dbReference>
<dbReference type="AGR" id="HGNC:18746"/>
<dbReference type="CTD" id="57152"/>
<dbReference type="DisGeNET" id="57152"/>
<dbReference type="GeneCards" id="SLURP1"/>
<dbReference type="HGNC" id="HGNC:18746">
    <property type="gene designation" value="SLURP1"/>
</dbReference>
<dbReference type="HPA" id="ENSG00000126233">
    <property type="expression patterns" value="Group enriched (esophagus, skin)"/>
</dbReference>
<dbReference type="MalaCards" id="SLURP1"/>
<dbReference type="MIM" id="248300">
    <property type="type" value="phenotype"/>
</dbReference>
<dbReference type="MIM" id="606119">
    <property type="type" value="gene"/>
</dbReference>
<dbReference type="neXtProt" id="NX_P55000"/>
<dbReference type="OpenTargets" id="ENSG00000126233"/>
<dbReference type="Orphanet" id="87503">
    <property type="disease" value="Mal de Meleda"/>
</dbReference>
<dbReference type="PharmGKB" id="PA134936818"/>
<dbReference type="VEuPathDB" id="HostDB:ENSG00000126233"/>
<dbReference type="eggNOG" id="ENOG502TDUY">
    <property type="taxonomic scope" value="Eukaryota"/>
</dbReference>
<dbReference type="GeneTree" id="ENSGT00940000162933"/>
<dbReference type="HOGENOM" id="CLU_141358_2_1_1"/>
<dbReference type="InParanoid" id="P55000"/>
<dbReference type="OMA" id="PKSCCYT"/>
<dbReference type="OrthoDB" id="9900838at2759"/>
<dbReference type="PAN-GO" id="P55000">
    <property type="GO annotations" value="1 GO annotation based on evolutionary models"/>
</dbReference>
<dbReference type="PhylomeDB" id="P55000"/>
<dbReference type="TreeFam" id="TF336080"/>
<dbReference type="PathwayCommons" id="P55000"/>
<dbReference type="SignaLink" id="P55000"/>
<dbReference type="BioGRID-ORCS" id="57152">
    <property type="hits" value="19 hits in 1139 CRISPR screens"/>
</dbReference>
<dbReference type="GeneWiki" id="SLURP1"/>
<dbReference type="GenomeRNAi" id="57152"/>
<dbReference type="Pharos" id="P55000">
    <property type="development level" value="Tbio"/>
</dbReference>
<dbReference type="PRO" id="PR:P55000"/>
<dbReference type="Proteomes" id="UP000005640">
    <property type="component" value="Chromosome 8"/>
</dbReference>
<dbReference type="RNAct" id="P55000">
    <property type="molecule type" value="protein"/>
</dbReference>
<dbReference type="Bgee" id="ENSG00000126233">
    <property type="expression patterns" value="Expressed in lower esophagus mucosa and 97 other cell types or tissues"/>
</dbReference>
<dbReference type="GO" id="GO:0070062">
    <property type="term" value="C:extracellular exosome"/>
    <property type="evidence" value="ECO:0007005"/>
    <property type="project" value="UniProtKB"/>
</dbReference>
<dbReference type="GO" id="GO:0005576">
    <property type="term" value="C:extracellular region"/>
    <property type="evidence" value="ECO:0000303"/>
    <property type="project" value="UniProtKB"/>
</dbReference>
<dbReference type="GO" id="GO:0005615">
    <property type="term" value="C:extracellular space"/>
    <property type="evidence" value="ECO:0000314"/>
    <property type="project" value="UniProtKB"/>
</dbReference>
<dbReference type="GO" id="GO:0030549">
    <property type="term" value="F:acetylcholine receptor activator activity"/>
    <property type="evidence" value="ECO:0000314"/>
    <property type="project" value="UniProtKB"/>
</dbReference>
<dbReference type="GO" id="GO:0005125">
    <property type="term" value="F:cytokine activity"/>
    <property type="evidence" value="ECO:0000303"/>
    <property type="project" value="UniProtKB"/>
</dbReference>
<dbReference type="GO" id="GO:0001775">
    <property type="term" value="P:cell activation"/>
    <property type="evidence" value="ECO:0000303"/>
    <property type="project" value="UniProtKB"/>
</dbReference>
<dbReference type="GO" id="GO:0007155">
    <property type="term" value="P:cell adhesion"/>
    <property type="evidence" value="ECO:0000304"/>
    <property type="project" value="UniProtKB"/>
</dbReference>
<dbReference type="GO" id="GO:0007626">
    <property type="term" value="P:locomotory behavior"/>
    <property type="evidence" value="ECO:0007669"/>
    <property type="project" value="Ensembl"/>
</dbReference>
<dbReference type="GO" id="GO:0030336">
    <property type="term" value="P:negative regulation of cell migration"/>
    <property type="evidence" value="ECO:0000314"/>
    <property type="project" value="UniProtKB"/>
</dbReference>
<dbReference type="GO" id="GO:0008285">
    <property type="term" value="P:negative regulation of cell population proliferation"/>
    <property type="evidence" value="ECO:0000314"/>
    <property type="project" value="UniProtKB"/>
</dbReference>
<dbReference type="GO" id="GO:0010839">
    <property type="term" value="P:negative regulation of keratinocyte proliferation"/>
    <property type="evidence" value="ECO:0007669"/>
    <property type="project" value="Ensembl"/>
</dbReference>
<dbReference type="GO" id="GO:0050884">
    <property type="term" value="P:neuromuscular process controlling posture"/>
    <property type="evidence" value="ECO:0007669"/>
    <property type="project" value="Ensembl"/>
</dbReference>
<dbReference type="GO" id="GO:0038195">
    <property type="term" value="P:urokinase plasminogen activator signaling pathway"/>
    <property type="evidence" value="ECO:0000314"/>
    <property type="project" value="UniProtKB"/>
</dbReference>
<dbReference type="CDD" id="cd23560">
    <property type="entry name" value="TFP_LU_ECD_SLURP1_like"/>
    <property type="match status" value="1"/>
</dbReference>
<dbReference type="FunFam" id="2.10.60.10:FF:000003">
    <property type="entry name" value="lymphocyte antigen 6E isoform X1"/>
    <property type="match status" value="1"/>
</dbReference>
<dbReference type="Gene3D" id="2.10.60.10">
    <property type="entry name" value="CD59"/>
    <property type="match status" value="1"/>
</dbReference>
<dbReference type="InterPro" id="IPR051110">
    <property type="entry name" value="Ly-6/neurotoxin-like_GPI-ap"/>
</dbReference>
<dbReference type="InterPro" id="IPR016054">
    <property type="entry name" value="LY6_UPA_recep-like"/>
</dbReference>
<dbReference type="InterPro" id="IPR045860">
    <property type="entry name" value="Snake_toxin-like_sf"/>
</dbReference>
<dbReference type="PANTHER" id="PTHR16983">
    <property type="entry name" value="UPAR/LY6 DOMAIN-CONTAINING PROTEIN"/>
    <property type="match status" value="1"/>
</dbReference>
<dbReference type="PANTHER" id="PTHR16983:SF16">
    <property type="entry name" value="UPAR_LY6 DOMAIN-CONTAINING PROTEIN"/>
    <property type="match status" value="1"/>
</dbReference>
<dbReference type="Pfam" id="PF00021">
    <property type="entry name" value="UPAR_LY6"/>
    <property type="match status" value="1"/>
</dbReference>
<dbReference type="SUPFAM" id="SSF57302">
    <property type="entry name" value="Snake toxin-like"/>
    <property type="match status" value="1"/>
</dbReference>
<reference key="1">
    <citation type="submission" date="1996-09" db="EMBL/GenBank/DDBJ databases">
        <authorList>
            <person name="Mastrangeli R."/>
        </authorList>
    </citation>
    <scope>NUCLEOTIDE SEQUENCE [GENOMIC DNA]</scope>
    <source>
        <tissue>Placenta</tissue>
    </source>
</reference>
<reference key="2">
    <citation type="journal article" date="2005" name="J. Invest. Dermatol.">
        <title>Biological effects of SLURP-1 on human keratinocytes.</title>
        <authorList>
            <person name="Arredondo J."/>
            <person name="Chernyavsky A.I."/>
            <person name="Webber R.J."/>
            <person name="Grando S.A."/>
        </authorList>
    </citation>
    <scope>NUCLEOTIDE SEQUENCE [MRNA]</scope>
    <source>
        <tissue>Skin</tissue>
    </source>
</reference>
<reference key="3">
    <citation type="journal article" date="2004" name="Genome Res.">
        <title>The status, quality, and expansion of the NIH full-length cDNA project: the Mammalian Gene Collection (MGC).</title>
        <authorList>
            <consortium name="The MGC Project Team"/>
        </authorList>
    </citation>
    <scope>NUCLEOTIDE SEQUENCE [LARGE SCALE MRNA]</scope>
</reference>
<reference key="4">
    <citation type="journal article" date="1996" name="Cytokine">
        <title>Partial N-terminal amino acid sequence of the anti-neoplastic urinary protein (ANUP) and the anti-tumour effect of the N-terminal nonapeptide of the unique cytokine present in human granulocytes.</title>
        <authorList>
            <person name="Ridge R.J."/>
            <person name="Sloane N.H."/>
        </authorList>
    </citation>
    <scope>PARTIAL PROTEIN SEQUENCE</scope>
    <scope>FUNCTION</scope>
    <source>
        <tissue>Granulocyte</tissue>
    </source>
</reference>
<reference key="5">
    <citation type="journal article" date="1999" name="Protein Sci.">
        <title>Structural and phylogenetic characterization of human SLURP-1, the first secreted mammalian member of the Ly-6/uPAR protein superfamily.</title>
        <authorList>
            <person name="Andermann K."/>
            <person name="Wattler F."/>
            <person name="Wattler S."/>
            <person name="Heine G."/>
            <person name="Meyer M."/>
            <person name="Forssmann W.-G."/>
            <person name="Nehls M."/>
        </authorList>
    </citation>
    <scope>PARTIAL PROTEIN SEQUENCE</scope>
    <scope>SIGNAL SEQUENCE CLEAVAGE SITE</scope>
</reference>
<reference key="6">
    <citation type="journal article" date="2003" name="Eur. J. Dermatol.">
        <title>ARS component B: structural characterization, tissue expression and regulation of the gene and protein (SLURP-1) associated with Mal de Meleda.</title>
        <authorList>
            <person name="Mastrangeli R."/>
            <person name="Donini S."/>
            <person name="Kelton C.A."/>
            <person name="He C."/>
            <person name="Bressan A."/>
            <person name="Milazzo F."/>
            <person name="Ciolli V."/>
            <person name="Borrelli F."/>
            <person name="Martelli F."/>
            <person name="Biffoni M."/>
            <person name="Serlupi-Crescenzi O."/>
            <person name="Serani S."/>
            <person name="Micangeli E."/>
            <person name="El Tayar N."/>
            <person name="Vaccaro R."/>
            <person name="Renda T."/>
            <person name="Lisciani R."/>
            <person name="Rossi M."/>
            <person name="Papoian R."/>
        </authorList>
    </citation>
    <scope>TISSUE SPECIFICITY</scope>
    <scope>INDUCTION</scope>
    <scope>POSSIBLE FUNCTION</scope>
</reference>
<reference key="7">
    <citation type="journal article" date="2003" name="Hum. Mol. Genet.">
        <title>Identification of SLURP-1 as an epidermal neuromodulator explains the clinical phenotype of Mal de Meleda.</title>
        <authorList>
            <person name="Chimienti F."/>
            <person name="Hogg R.C."/>
            <person name="Plantard L."/>
            <person name="Lehmann C."/>
            <person name="Brakch N."/>
            <person name="Fischer J."/>
            <person name="Huber M."/>
            <person name="Bertrand D."/>
            <person name="Hohl D."/>
        </authorList>
    </citation>
    <scope>FUNCTION</scope>
    <scope>SUBCELLULAR LOCATION</scope>
</reference>
<reference key="8">
    <citation type="journal article" date="2007" name="J. Invest. Dermatol.">
        <title>SLURP1 is a late marker of epidermal differentiation and is absent in Mal de Meleda.</title>
        <authorList>
            <person name="Favre B."/>
            <person name="Plantard L."/>
            <person name="Aeschbach L."/>
            <person name="Brakch N."/>
            <person name="Christen-Zaech S."/>
            <person name="de Viragh P.A."/>
            <person name="Sergeant A."/>
            <person name="Huber M."/>
            <person name="Hohl D."/>
        </authorList>
    </citation>
    <scope>TISSUE SPECIFICITY</scope>
    <scope>POSSIBLE FUNCTION</scope>
    <scope>VARIANT MDM HIS-71</scope>
    <scope>CHARACTERIZATION OF VARIANTS MDM ARG-15 AND ARG-86</scope>
</reference>
<reference key="9">
    <citation type="journal article" date="2007" name="Life Sci.">
        <title>Immune system expression of SLURP-1 and SLURP-2, two endogenous nicotinic acetylcholine receptor ligands.</title>
        <authorList>
            <person name="Moriwaki Y."/>
            <person name="Yoshikawa K."/>
            <person name="Fukuda H."/>
            <person name="Fujii Y.X."/>
            <person name="Misawa H."/>
            <person name="Kawashima K."/>
        </authorList>
    </citation>
    <scope>FUNCTION</scope>
</reference>
<reference key="10">
    <citation type="journal article" date="2001" name="Hum. Mol. Genet.">
        <title>Mutations in the gene encoding SLURP-1 in Mal de Meleda.</title>
        <authorList>
            <person name="Fischer J."/>
            <person name="Bouadjar B."/>
            <person name="Heilig R."/>
            <person name="Huber M."/>
            <person name="Lefevre C."/>
            <person name="Jobard F."/>
            <person name="Macari F."/>
            <person name="Bakija-Konsuo A."/>
            <person name="Ait-Belkacem F."/>
            <person name="Weissenbach J."/>
            <person name="Lathrop M."/>
            <person name="Hohl D."/>
            <person name="Prud'homme J.-F."/>
        </authorList>
    </citation>
    <scope>INVOLVEMENT IN MDM</scope>
</reference>
<reference key="11">
    <citation type="journal article" date="2010" name="Biochem. Biophys. Res. Commun.">
        <title>Down-regulation of secreted lymphocyte antigen-6/urokinase-type plasminogen activator receptor-related peptide-1 (SLURP-1), an endogenous allosteric alpha7 nicotinic acetylcholine receptor modulator, in murine and human asthmatic conditions.</title>
        <authorList>
            <person name="Narumoto O."/>
            <person name="Horiguchi K."/>
            <person name="Horiguchi S."/>
            <person name="Moriwaki Y."/>
            <person name="Takano-Ohmuro H."/>
            <person name="Shoji S."/>
            <person name="Misawa H."/>
            <person name="Yamashita N."/>
            <person name="Nagase T."/>
            <person name="Kawashima K."/>
            <person name="Yamashita N."/>
        </authorList>
    </citation>
    <scope>INDUCTION</scope>
</reference>
<reference key="12">
    <citation type="journal article" date="2014" name="Invest. Ophthalmol. Vis. Sci.">
        <title>SLURP-1 modulates corneal homeostasis by serving as a soluble scavenger of urokinase-type plasminogen activator.</title>
        <authorList>
            <person name="Swamynathan S."/>
            <person name="Swamynathan S.K."/>
        </authorList>
    </citation>
    <scope>FUNCTION</scope>
    <scope>INTERACTION WITH PLAU</scope>
</reference>
<reference key="13">
    <citation type="journal article" date="2015" name="Br. J. Dermatol.">
        <title>Heterogeneity in the properties of mutant secreted lymphocyte antigen 6/urokinase receptor-related protein 1 (SLURP1) in Mal de Meleda.</title>
        <authorList>
            <person name="Adeyo O."/>
            <person name="Oberer M."/>
            <person name="Ploug M."/>
            <person name="Fong L.G."/>
            <person name="Young S.G."/>
            <person name="Beigneux A.P."/>
        </authorList>
    </citation>
    <scope>SUBCELLULAR LOCATION</scope>
    <scope>CHARACTERIZATION OF VARIANTS MDM HIS-71; PRO-71; ARG-77; SER-82; SER-94 AND PRO-98</scope>
</reference>
<reference key="14">
    <citation type="journal article" date="2016" name="PLoS ONE">
        <title>Human secreted Ly-6/uPAR related protein-1 (SLURP-1) is a selective allosteric antagonist of alpha7 nicotinic acetylcholine receptor.</title>
        <authorList>
            <person name="Lyukmanova E.N."/>
            <person name="Shulepko M.A."/>
            <person name="Kudryavtsev D."/>
            <person name="Bychkov M.L."/>
            <person name="Kulbatskii D.S."/>
            <person name="Kasheverov I.E."/>
            <person name="Astapova M.V."/>
            <person name="Feofanov A.V."/>
            <person name="Thomsen M.S."/>
            <person name="Mikkelsen J.D."/>
            <person name="Shenkarev Z.O."/>
            <person name="Tsetlin V.I."/>
            <person name="Dolgikh D.A."/>
            <person name="Kirpichnikov M.P."/>
        </authorList>
    </citation>
    <scope>FUNCTION</scope>
    <scope>SUBCELLULAR LOCATION</scope>
    <scope>INTERACTION WITH CHRNA7</scope>
</reference>
<reference key="15">
    <citation type="journal article" date="2013" name="Biochemistry (Mosc.)">
        <title>Human neuromodulator SLURP-1: bacterial expression, binding to muscle-type nicotinic acetylcholine receptor, secondary structure, and conformational heterogeneity in solution.</title>
        <authorList>
            <person name="Shulepko M.A."/>
            <person name="Lyukmanova E.N."/>
            <person name="Paramonov A.S."/>
            <person name="Lobas A.A."/>
            <person name="Shenkarev Z.O."/>
            <person name="Kasheverov I.E."/>
            <person name="Dolgikh D.A."/>
            <person name="Tsetlin V.I."/>
            <person name="Arseniev A.S."/>
            <person name="Kirpichnikov M.P."/>
        </authorList>
    </citation>
    <scope>STRUCTURE BY NMR OF 23-103</scope>
</reference>
<reference evidence="23 24" key="16">
    <citation type="journal article" date="2020" name="Int. J. Mol. Sci.">
        <title>Structural Diversity and Dynamics of Human Three-Finger Proteins Acting on Nicotinic Acetylcholine Receptors.</title>
        <authorList>
            <person name="Paramonov A.S."/>
            <person name="Kocharovskaya M.V."/>
            <person name="Tsarev A.V."/>
            <person name="Kulbatskii D.S."/>
            <person name="Loktyushov E.V."/>
            <person name="Shulepko M.A."/>
            <person name="Kirpichnikov M.P."/>
            <person name="Lyukmanova E.N."/>
            <person name="Shenkarev Z.O."/>
        </authorList>
    </citation>
    <scope>STRUCTURE BY NMR OF 23-103</scope>
    <scope>DISULFIDE BONDS</scope>
</reference>
<reference key="17">
    <citation type="journal article" date="2003" name="Clin. Exp. Dermatol.">
        <title>A novel mutation in the ARS (component B) gene encoding SLURP-1 in a family with Mal de Meleda.</title>
        <authorList>
            <person name="Yerebakan O."/>
            <person name="Hu G."/>
            <person name="Yilmaz E."/>
            <person name="Celebi J.T."/>
        </authorList>
    </citation>
    <scope>VARIANT MDM PRO-98</scope>
</reference>
<reference key="18">
    <citation type="journal article" date="2003" name="Hum. Genet.">
        <title>Mal de Meleda (MDM) caused by mutations in the gene for SLURP-1 in patients from Germany, Turkey, Palestine, and the United Arab Emirates.</title>
        <authorList>
            <person name="Eckl K.M."/>
            <person name="Stevens H.P."/>
            <person name="Lestringant G.G."/>
            <person name="Westenberger-Treumann M."/>
            <person name="Traupe H."/>
            <person name="Hinz B."/>
            <person name="Frossard P.M."/>
            <person name="Stadler R."/>
            <person name="Leigh I.M."/>
            <person name="Nuernberg P."/>
            <person name="Reis A."/>
            <person name="Hennies H.C."/>
        </authorList>
    </citation>
    <scope>VARIANTS MDM ARG-15 AND ARG-86</scope>
</reference>
<reference key="19">
    <citation type="journal article" date="2004" name="Clin. Genet.">
        <title>Heterozygous manifestations in female carriers of Mal de Meleda.</title>
        <authorList>
            <person name="Mokni M."/>
            <person name="Charfeddine C."/>
            <person name="Ben Mously R."/>
            <person name="Baccouche D."/>
            <person name="Kaabi B."/>
            <person name="Ben Osman A."/>
            <person name="Dellagi K."/>
            <person name="Abdelhak S."/>
        </authorList>
    </citation>
    <scope>VARIANTS MDM ARG-77 AND TYR-99</scope>
</reference>
<reference key="20">
    <citation type="journal article" date="2009" name="Br. J. Dermatol.">
        <title>Compound heterozygosity for ARS component B mutations in a Dutch patient with mal de Meleda.</title>
        <authorList>
            <person name="Nellen R.G."/>
            <person name="van Geel M."/>
            <person name="Steijlen P.M."/>
            <person name="van Steensel M.A."/>
        </authorList>
    </citation>
    <scope>VARIANTS MDM ARG-15 AND PRO-71</scope>
</reference>
<reference key="21">
    <citation type="journal article" date="2011" name="Arch. Dermatol.">
        <title>A novel homozygous missense mutation in SLURP1 causing Mal de Meleda with an atypical phenotype.</title>
        <authorList>
            <person name="Gruber R."/>
            <person name="Hennies H.C."/>
            <person name="Romani N."/>
            <person name="Schmuth M."/>
        </authorList>
    </citation>
    <scope>VARIANT MDM SER-82</scope>
</reference>
<reference key="22">
    <citation type="journal article" date="2014" name="Acta Derm. Venereol.">
        <title>Palmoplantar keratoderma of the Gamborg-Nielsen type is caused by mutations in the SLURP1 gene and represents a variant of Mal de Meleda.</title>
        <authorList>
            <person name="Zhao L."/>
            <person name="Vahlquist A."/>
            <person name="Virtanen M."/>
            <person name="Wennerstrand L."/>
            <person name="Lind L.K."/>
            <person name="Lundstroem A."/>
            <person name="Hellstroem Pigg M."/>
        </authorList>
    </citation>
    <scope>VARIANTS MDM ARG-15 AND SER-94</scope>
</reference>
<name>SLUR1_HUMAN</name>
<comment type="function">
    <text evidence="1 6 10 16 18 20 21">Has an antitumor activity (PubMed:8742060). Was found to be a marker of late differentiation of the skin. Implicated in maintaining the physiological and structural integrity of the keratinocyte layers of the skin (PubMed:14721776, PubMed:17008884). In vitro down-regulates keratinocyte proliferation; the function may involve the proposed role as modulator of nicotinic acetylcholine receptors (nAChRs) activity. In vitro inhibits alpha-7-dependent nAChR currents in an allosteric manner (PubMed:14506129, PubMed:26905431). In T cells may be involved in regulation of intracellular Ca(2+) signaling (PubMed:17286989). Seems to have an immunomodulatory function in the cornea (By similarity). The function may implicate a possible role as a scavenger receptor for PLAU thereby blocking PLAU-dependent functions of PLAUR such as in cell migration and proliferation (PubMed:25168896).</text>
</comment>
<comment type="subunit">
    <text>Homodimer. Interacts with PLAU (PubMed:25168896). Interacts with CHRNA7 (PubMed:26905431).</text>
</comment>
<comment type="interaction">
    <interactant intactId="EBI-8830896">
        <id>P55000</id>
    </interactant>
    <interactant intactId="EBI-79333">
        <id>P36544</id>
        <label>CHRNA7</label>
    </interactant>
    <organismsDiffer>false</organismsDiffer>
    <experiments>2</experiments>
</comment>
<comment type="interaction">
    <interactant intactId="EBI-8830896">
        <id>P55000</id>
    </interactant>
    <interactant intactId="EBI-3905042">
        <id>P00749</id>
        <label>PLAU</label>
    </interactant>
    <organismsDiffer>false</organismsDiffer>
    <experiments>2</experiments>
</comment>
<comment type="subcellular location">
    <subcellularLocation>
        <location evidence="6 15 16">Secreted</location>
    </subcellularLocation>
</comment>
<comment type="tissue specificity">
    <text evidence="7 9">Granulocytes. Expressed in skin. Predominantly expressed in the granular layer of skin, notably the acrosyringium. Identified in several biological fluids such as sweat, saliva, tears, plasma and urine.</text>
</comment>
<comment type="induction">
    <text evidence="7 12">Regulated by retinoic acid, EGF and IFNG/IFN-gamma (PubMed:14721776). Down-regulated by IL-13 in cultured human bronchial epithelial cells (related to asthmatic condition) (PubMed:20621062).</text>
</comment>
<comment type="disease" evidence="3 4 5 8 9 11 13 14 15">
    <disease id="DI-00698">
        <name>Mal de Meleda</name>
        <acronym>MDM</acronym>
        <description>A rare autosomal recessive skin disorder, characterized by diffuse transgressive palmoplantar keratoderma with keratotic lesions extending onto the dorsa of the hands and the feet (transgrediens). Patients may have hyperhidrosis. Other features include perioral erythema, lichenoid plaques on the knees and the elbows, and nail abnormalities.</description>
        <dbReference type="MIM" id="248300"/>
    </disease>
    <text>The disease is caused by variants affecting the gene represented in this entry.</text>
</comment>
<comment type="caution">
    <text evidence="19">It is not certain that ARS and ANUP are identical proteins.</text>
</comment>
<evidence type="ECO:0000250" key="1">
    <source>
        <dbReference type="UniProtKB" id="Q9Z0K7"/>
    </source>
</evidence>
<evidence type="ECO:0000269" key="2">
    <source>
    </source>
</evidence>
<evidence type="ECO:0000269" key="3">
    <source>
    </source>
</evidence>
<evidence type="ECO:0000269" key="4">
    <source>
    </source>
</evidence>
<evidence type="ECO:0000269" key="5">
    <source>
    </source>
</evidence>
<evidence type="ECO:0000269" key="6">
    <source>
    </source>
</evidence>
<evidence type="ECO:0000269" key="7">
    <source>
    </source>
</evidence>
<evidence type="ECO:0000269" key="8">
    <source>
    </source>
</evidence>
<evidence type="ECO:0000269" key="9">
    <source>
    </source>
</evidence>
<evidence type="ECO:0000269" key="10">
    <source>
    </source>
</evidence>
<evidence type="ECO:0000269" key="11">
    <source>
    </source>
</evidence>
<evidence type="ECO:0000269" key="12">
    <source>
    </source>
</evidence>
<evidence type="ECO:0000269" key="13">
    <source>
    </source>
</evidence>
<evidence type="ECO:0000269" key="14">
    <source>
    </source>
</evidence>
<evidence type="ECO:0000269" key="15">
    <source>
    </source>
</evidence>
<evidence type="ECO:0000269" key="16">
    <source>
    </source>
</evidence>
<evidence type="ECO:0000269" key="17">
    <source>
    </source>
</evidence>
<evidence type="ECO:0000269" key="18">
    <source>
    </source>
</evidence>
<evidence type="ECO:0000305" key="19"/>
<evidence type="ECO:0000305" key="20">
    <source>
    </source>
</evidence>
<evidence type="ECO:0000305" key="21">
    <source>
    </source>
</evidence>
<evidence type="ECO:0000305" key="22">
    <source>
    </source>
</evidence>
<evidence type="ECO:0007744" key="23">
    <source>
        <dbReference type="PDB" id="6ZZE"/>
    </source>
</evidence>
<evidence type="ECO:0007744" key="24">
    <source>
        <dbReference type="PDB" id="6ZZF"/>
    </source>
</evidence>
<evidence type="ECO:0007829" key="25">
    <source>
        <dbReference type="PDB" id="6ZZE"/>
    </source>
</evidence>
<accession>P55000</accession>
<accession>Q53YJ6</accession>
<accession>Q6PUA6</accession>
<accession>Q92483</accession>
<feature type="signal peptide" evidence="2">
    <location>
        <begin position="1"/>
        <end position="22"/>
    </location>
</feature>
<feature type="chain" id="PRO_0000036167" description="Secreted Ly-6/uPAR-related protein 1">
    <location>
        <begin position="23"/>
        <end position="103"/>
    </location>
</feature>
<feature type="domain" description="UPAR/Ly6">
    <location>
        <begin position="24"/>
        <end position="73"/>
    </location>
</feature>
<feature type="disulfide bond" evidence="17 22 23 24">
    <location>
        <begin position="25"/>
        <end position="50"/>
    </location>
</feature>
<feature type="disulfide bond" evidence="17 22 23 24">
    <location>
        <begin position="28"/>
        <end position="37"/>
    </location>
</feature>
<feature type="disulfide bond" evidence="17 22 23 24">
    <location>
        <begin position="43"/>
        <end position="73"/>
    </location>
</feature>
<feature type="disulfide bond" evidence="17 22 23 24">
    <location>
        <begin position="77"/>
        <end position="93"/>
    </location>
</feature>
<feature type="disulfide bond" evidence="17 22 23 24">
    <location>
        <begin position="94"/>
        <end position="99"/>
    </location>
</feature>
<feature type="sequence variant" id="VAR_032871" description="In MDM; no expression of the protein; dbSNP:rs121908318." evidence="4 9 11 14">
    <original>W</original>
    <variation>R</variation>
    <location>
        <position position="15"/>
    </location>
</feature>
<feature type="sequence variant" id="VAR_032872" description="In MDM; reduced expression of the protein; decreased secretion; dbSNP:rs1448017161." evidence="9 15">
    <original>R</original>
    <variation>H</variation>
    <location>
        <position position="71"/>
    </location>
</feature>
<feature type="sequence variant" id="VAR_077307" description="In MDM; decreased secretion." evidence="11 15">
    <original>R</original>
    <variation>P</variation>
    <location>
        <position position="71"/>
    </location>
</feature>
<feature type="sequence variant" id="VAR_032873" description="In MDM; decreased secretion; dbSNP:rs121908319." evidence="8 15">
    <original>C</original>
    <variation>R</variation>
    <location>
        <position position="77"/>
    </location>
</feature>
<feature type="sequence variant" id="VAR_077308" description="In MDM; uncertain significance; no effect on secretion; dbSNP:rs1181208026." evidence="13 15">
    <original>P</original>
    <variation>S</variation>
    <location>
        <position position="82"/>
    </location>
</feature>
<feature type="sequence variant" id="VAR_032874" description="In MDM; reduced expression of the protein; dbSNP:rs28937888." evidence="4 9">
    <original>G</original>
    <variation>R</variation>
    <location>
        <position position="86"/>
    </location>
</feature>
<feature type="sequence variant" id="VAR_077309" description="In MDM; decreased secretion; dbSNP:rs772388665." evidence="14 15">
    <original>C</original>
    <variation>S</variation>
    <location>
        <position position="94"/>
    </location>
</feature>
<feature type="sequence variant" id="VAR_077310" description="In MDM; decreased secretion." evidence="5 15">
    <original>L</original>
    <variation>P</variation>
    <location>
        <position position="98"/>
    </location>
</feature>
<feature type="sequence variant" id="VAR_032875" description="In MDM; dbSNP:rs121908320." evidence="8">
    <original>C</original>
    <variation>Y</variation>
    <location>
        <position position="99"/>
    </location>
</feature>
<feature type="sequence conflict" description="In Ref. 2; AAT01436." evidence="19" ref="2">
    <original>M</original>
    <variation>V</variation>
    <location>
        <position position="17"/>
    </location>
</feature>
<feature type="sequence conflict" description="In Ref. 4; AA sequence." evidence="19" ref="4">
    <original>A</original>
    <variation>Q</variation>
    <location>
        <position position="22"/>
    </location>
</feature>
<feature type="sequence conflict" description="In Ref. 4; AA sequence." evidence="19" ref="4">
    <original>S</original>
    <variation>A</variation>
    <location>
        <position position="36"/>
    </location>
</feature>
<feature type="strand" evidence="25">
    <location>
        <begin position="24"/>
        <end position="26"/>
    </location>
</feature>
<feature type="strand" evidence="25">
    <location>
        <begin position="34"/>
        <end position="36"/>
    </location>
</feature>
<feature type="strand" evidence="25">
    <location>
        <begin position="40"/>
        <end position="42"/>
    </location>
</feature>
<feature type="strand" evidence="25">
    <location>
        <begin position="49"/>
        <end position="55"/>
    </location>
</feature>
<feature type="strand" evidence="25">
    <location>
        <begin position="59"/>
        <end position="61"/>
    </location>
</feature>
<feature type="strand" evidence="25">
    <location>
        <begin position="68"/>
        <end position="76"/>
    </location>
</feature>
<feature type="strand" evidence="25">
    <location>
        <begin position="90"/>
        <end position="96"/>
    </location>
</feature>
<proteinExistence type="evidence at protein level"/>
<gene>
    <name type="primary">SLURP1</name>
    <name type="synonym">ARS</name>
</gene>
<sequence length="103" mass="11186">MASRWAVQLLLVAAWSMGCGEALKCYTCKEPMTSASCRTITRCKPEDTACMTTLVTVEAEYPFNQSPVVTRSCSSSCVATDPDSIGAAHLIFCCFRDLCNSEL</sequence>
<protein>
    <recommendedName>
        <fullName>Secreted Ly-6/uPAR-related protein 1</fullName>
        <shortName>SLURP-1</shortName>
    </recommendedName>
    <alternativeName>
        <fullName>ARS component B</fullName>
    </alternativeName>
    <alternativeName>
        <fullName>ARS(component B)-81/S</fullName>
    </alternativeName>
    <alternativeName>
        <fullName>Anti-neoplastic urinary protein</fullName>
        <shortName>ANUP</shortName>
    </alternativeName>
</protein>